<organism>
    <name type="scientific">Brucella abortus (strain 2308)</name>
    <dbReference type="NCBI Taxonomy" id="359391"/>
    <lineage>
        <taxon>Bacteria</taxon>
        <taxon>Pseudomonadati</taxon>
        <taxon>Pseudomonadota</taxon>
        <taxon>Alphaproteobacteria</taxon>
        <taxon>Hyphomicrobiales</taxon>
        <taxon>Brucellaceae</taxon>
        <taxon>Brucella/Ochrobactrum group</taxon>
        <taxon>Brucella</taxon>
    </lineage>
</organism>
<accession>Q2YPX7</accession>
<accession>Q07432</accession>
<accession>Q57D35</accession>
<evidence type="ECO:0000255" key="1">
    <source>
        <dbReference type="HAMAP-Rule" id="MF_00984"/>
    </source>
</evidence>
<evidence type="ECO:0000256" key="2">
    <source>
        <dbReference type="SAM" id="MobiDB-lite"/>
    </source>
</evidence>
<comment type="function">
    <text evidence="1">Plays an important role in DNA replication, recombination and repair. Binds to ssDNA and to an array of partner proteins to recruit them to their sites of action during DNA metabolism.</text>
</comment>
<comment type="subunit">
    <text evidence="1">Homotetramer.</text>
</comment>
<proteinExistence type="inferred from homology"/>
<gene>
    <name type="primary">ssb</name>
    <name type="ordered locus">BAB1_1126</name>
</gene>
<sequence>MAGSVNKVILVGNLGADPEIRRLNSGDMVANLRIATSESWRDRQTGERKDRTEWHSVVIFNENLAKVAEQYLKKGAKVYIEGALQTRKWQDQNGNDRYSKEIVLQKFRGELQMLDSRSEGGEGRSFGGGGNRNQMSDYSGGGGDFGSSGPSSGSSGGFSRDLDDEIPF</sequence>
<protein>
    <recommendedName>
        <fullName evidence="1">Single-stranded DNA-binding protein</fullName>
        <shortName evidence="1">SSB</shortName>
    </recommendedName>
</protein>
<keyword id="KW-0227">DNA damage</keyword>
<keyword id="KW-0233">DNA recombination</keyword>
<keyword id="KW-0234">DNA repair</keyword>
<keyword id="KW-0235">DNA replication</keyword>
<keyword id="KW-0238">DNA-binding</keyword>
<keyword id="KW-1185">Reference proteome</keyword>
<feature type="chain" id="PRO_0000096014" description="Single-stranded DNA-binding protein">
    <location>
        <begin position="1"/>
        <end position="168"/>
    </location>
</feature>
<feature type="domain" description="SSB" evidence="1">
    <location>
        <begin position="5"/>
        <end position="111"/>
    </location>
</feature>
<feature type="DNA-binding region" evidence="1">
    <location>
        <begin position="54"/>
        <end position="60"/>
    </location>
</feature>
<feature type="region of interest" description="Disordered" evidence="2">
    <location>
        <begin position="113"/>
        <end position="168"/>
    </location>
</feature>
<feature type="short sequence motif" description="Important for interaction with partner proteins" evidence="1">
    <location>
        <begin position="163"/>
        <end position="168"/>
    </location>
</feature>
<feature type="compositionally biased region" description="Low complexity" evidence="2">
    <location>
        <begin position="147"/>
        <end position="159"/>
    </location>
</feature>
<reference key="1">
    <citation type="journal article" date="1993" name="Infect. Immun.">
        <title>Isolation of Brucella abortus ssb and uvrA genes from a genomic library by use of lymphocytes as probes.</title>
        <authorList>
            <person name="Zhu Y."/>
            <person name="Oliveira S.C."/>
            <person name="Splitter G.A."/>
        </authorList>
    </citation>
    <scope>NUCLEOTIDE SEQUENCE [GENOMIC DNA]</scope>
</reference>
<reference key="2">
    <citation type="journal article" date="2005" name="Infect. Immun.">
        <title>Whole-genome analyses of speciation events in pathogenic Brucellae.</title>
        <authorList>
            <person name="Chain P.S."/>
            <person name="Comerci D.J."/>
            <person name="Tolmasky M.E."/>
            <person name="Larimer F.W."/>
            <person name="Malfatti S.A."/>
            <person name="Vergez L.M."/>
            <person name="Aguero F."/>
            <person name="Land M.L."/>
            <person name="Ugalde R.A."/>
            <person name="Garcia E."/>
        </authorList>
    </citation>
    <scope>NUCLEOTIDE SEQUENCE [LARGE SCALE GENOMIC DNA]</scope>
    <source>
        <strain>2308</strain>
    </source>
</reference>
<name>SSB_BRUA2</name>
<dbReference type="EMBL" id="L10843">
    <property type="protein sequence ID" value="AAA16818.1"/>
    <property type="molecule type" value="Unassigned_DNA"/>
</dbReference>
<dbReference type="EMBL" id="AM040264">
    <property type="protein sequence ID" value="CAJ11082.1"/>
    <property type="molecule type" value="Genomic_DNA"/>
</dbReference>
<dbReference type="PIR" id="I40352">
    <property type="entry name" value="I40352"/>
</dbReference>
<dbReference type="RefSeq" id="WP_002964231.1">
    <property type="nucleotide sequence ID" value="NZ_KN046823.1"/>
</dbReference>
<dbReference type="SMR" id="Q2YPX7"/>
<dbReference type="STRING" id="359391.BAB1_1126"/>
<dbReference type="GeneID" id="93016557"/>
<dbReference type="KEGG" id="bmf:BAB1_1126"/>
<dbReference type="PATRIC" id="fig|359391.11.peg.27"/>
<dbReference type="HOGENOM" id="CLU_078758_0_1_5"/>
<dbReference type="PhylomeDB" id="Q2YPX7"/>
<dbReference type="Proteomes" id="UP000002719">
    <property type="component" value="Chromosome I"/>
</dbReference>
<dbReference type="GO" id="GO:0009295">
    <property type="term" value="C:nucleoid"/>
    <property type="evidence" value="ECO:0007669"/>
    <property type="project" value="TreeGrafter"/>
</dbReference>
<dbReference type="GO" id="GO:0003697">
    <property type="term" value="F:single-stranded DNA binding"/>
    <property type="evidence" value="ECO:0007669"/>
    <property type="project" value="UniProtKB-UniRule"/>
</dbReference>
<dbReference type="GO" id="GO:0006310">
    <property type="term" value="P:DNA recombination"/>
    <property type="evidence" value="ECO:0007669"/>
    <property type="project" value="UniProtKB-UniRule"/>
</dbReference>
<dbReference type="GO" id="GO:0006281">
    <property type="term" value="P:DNA repair"/>
    <property type="evidence" value="ECO:0007669"/>
    <property type="project" value="UniProtKB-UniRule"/>
</dbReference>
<dbReference type="GO" id="GO:0006260">
    <property type="term" value="P:DNA replication"/>
    <property type="evidence" value="ECO:0007669"/>
    <property type="project" value="UniProtKB-UniRule"/>
</dbReference>
<dbReference type="CDD" id="cd04496">
    <property type="entry name" value="SSB_OBF"/>
    <property type="match status" value="1"/>
</dbReference>
<dbReference type="Gene3D" id="2.40.50.140">
    <property type="entry name" value="Nucleic acid-binding proteins"/>
    <property type="match status" value="1"/>
</dbReference>
<dbReference type="HAMAP" id="MF_00984">
    <property type="entry name" value="SSB"/>
    <property type="match status" value="1"/>
</dbReference>
<dbReference type="InterPro" id="IPR012340">
    <property type="entry name" value="NA-bd_OB-fold"/>
</dbReference>
<dbReference type="InterPro" id="IPR000424">
    <property type="entry name" value="Primosome_PriB/ssb"/>
</dbReference>
<dbReference type="InterPro" id="IPR011344">
    <property type="entry name" value="ssDNA-bd"/>
</dbReference>
<dbReference type="NCBIfam" id="TIGR00621">
    <property type="entry name" value="ssb"/>
    <property type="match status" value="1"/>
</dbReference>
<dbReference type="PANTHER" id="PTHR10302">
    <property type="entry name" value="SINGLE-STRANDED DNA-BINDING PROTEIN"/>
    <property type="match status" value="1"/>
</dbReference>
<dbReference type="PANTHER" id="PTHR10302:SF27">
    <property type="entry name" value="SINGLE-STRANDED DNA-BINDING PROTEIN"/>
    <property type="match status" value="1"/>
</dbReference>
<dbReference type="Pfam" id="PF00436">
    <property type="entry name" value="SSB"/>
    <property type="match status" value="1"/>
</dbReference>
<dbReference type="SUPFAM" id="SSF50249">
    <property type="entry name" value="Nucleic acid-binding proteins"/>
    <property type="match status" value="1"/>
</dbReference>
<dbReference type="PROSITE" id="PS50935">
    <property type="entry name" value="SSB"/>
    <property type="match status" value="1"/>
</dbReference>